<proteinExistence type="inferred from homology"/>
<organism>
    <name type="scientific">Phytoplasma mali (strain AT)</name>
    <dbReference type="NCBI Taxonomy" id="482235"/>
    <lineage>
        <taxon>Bacteria</taxon>
        <taxon>Bacillati</taxon>
        <taxon>Mycoplasmatota</taxon>
        <taxon>Mollicutes</taxon>
        <taxon>Acholeplasmatales</taxon>
        <taxon>Acholeplasmataceae</taxon>
        <taxon>Candidatus Phytoplasma</taxon>
        <taxon>16SrX (Apple proliferation group)</taxon>
    </lineage>
</organism>
<feature type="chain" id="PRO_1000125294" description="Cytidylate kinase">
    <location>
        <begin position="1"/>
        <end position="232"/>
    </location>
</feature>
<feature type="binding site" evidence="1">
    <location>
        <begin position="10"/>
        <end position="18"/>
    </location>
    <ligand>
        <name>ATP</name>
        <dbReference type="ChEBI" id="CHEBI:30616"/>
    </ligand>
</feature>
<sequence>MKGFKIAIDGPAASGKSTICKLIAEKLNCVHIDTGLMFRVITLYLIKNKVNWAQITEENYLKLLLNNCNIYYEKNHIYCNYQKMCLEIKLKRIEIDNKVSLVASLPFIRQKLLLLQQEIIKNNPYLIMDGRDIGTIVMPNADLKIFLTANIEQRILRRVNEFKSNKSVNELQKITNNIKLRDHKDFNRLISPLKKAEDAILLDTTDINIIETVNQIHNLILHKKKLLNQNEF</sequence>
<gene>
    <name evidence="1" type="primary">cmk</name>
    <name type="ordered locus">ATP_00122</name>
</gene>
<evidence type="ECO:0000255" key="1">
    <source>
        <dbReference type="HAMAP-Rule" id="MF_00238"/>
    </source>
</evidence>
<name>KCY_PHYMT</name>
<accession>B3R0E5</accession>
<comment type="catalytic activity">
    <reaction evidence="1">
        <text>CMP + ATP = CDP + ADP</text>
        <dbReference type="Rhea" id="RHEA:11600"/>
        <dbReference type="ChEBI" id="CHEBI:30616"/>
        <dbReference type="ChEBI" id="CHEBI:58069"/>
        <dbReference type="ChEBI" id="CHEBI:60377"/>
        <dbReference type="ChEBI" id="CHEBI:456216"/>
        <dbReference type="EC" id="2.7.4.25"/>
    </reaction>
</comment>
<comment type="catalytic activity">
    <reaction evidence="1">
        <text>dCMP + ATP = dCDP + ADP</text>
        <dbReference type="Rhea" id="RHEA:25094"/>
        <dbReference type="ChEBI" id="CHEBI:30616"/>
        <dbReference type="ChEBI" id="CHEBI:57566"/>
        <dbReference type="ChEBI" id="CHEBI:58593"/>
        <dbReference type="ChEBI" id="CHEBI:456216"/>
        <dbReference type="EC" id="2.7.4.25"/>
    </reaction>
</comment>
<comment type="subcellular location">
    <subcellularLocation>
        <location evidence="1">Cytoplasm</location>
    </subcellularLocation>
</comment>
<comment type="similarity">
    <text evidence="1">Belongs to the cytidylate kinase family. Type 1 subfamily.</text>
</comment>
<dbReference type="EC" id="2.7.4.25" evidence="1"/>
<dbReference type="EMBL" id="CU469464">
    <property type="protein sequence ID" value="CAP18309.1"/>
    <property type="molecule type" value="Genomic_DNA"/>
</dbReference>
<dbReference type="SMR" id="B3R0E5"/>
<dbReference type="STRING" id="37692.ATP_00122"/>
<dbReference type="KEGG" id="pml:ATP_00122"/>
<dbReference type="eggNOG" id="COG0283">
    <property type="taxonomic scope" value="Bacteria"/>
</dbReference>
<dbReference type="HOGENOM" id="CLU_079959_0_2_14"/>
<dbReference type="Proteomes" id="UP000002020">
    <property type="component" value="Chromosome"/>
</dbReference>
<dbReference type="GO" id="GO:0005737">
    <property type="term" value="C:cytoplasm"/>
    <property type="evidence" value="ECO:0007669"/>
    <property type="project" value="UniProtKB-SubCell"/>
</dbReference>
<dbReference type="GO" id="GO:0005524">
    <property type="term" value="F:ATP binding"/>
    <property type="evidence" value="ECO:0007669"/>
    <property type="project" value="UniProtKB-UniRule"/>
</dbReference>
<dbReference type="GO" id="GO:0036430">
    <property type="term" value="F:CMP kinase activity"/>
    <property type="evidence" value="ECO:0007669"/>
    <property type="project" value="RHEA"/>
</dbReference>
<dbReference type="GO" id="GO:0036431">
    <property type="term" value="F:dCMP kinase activity"/>
    <property type="evidence" value="ECO:0007669"/>
    <property type="project" value="RHEA"/>
</dbReference>
<dbReference type="GO" id="GO:0006220">
    <property type="term" value="P:pyrimidine nucleotide metabolic process"/>
    <property type="evidence" value="ECO:0007669"/>
    <property type="project" value="UniProtKB-UniRule"/>
</dbReference>
<dbReference type="CDD" id="cd02020">
    <property type="entry name" value="CMPK"/>
    <property type="match status" value="1"/>
</dbReference>
<dbReference type="Gene3D" id="3.40.50.300">
    <property type="entry name" value="P-loop containing nucleotide triphosphate hydrolases"/>
    <property type="match status" value="1"/>
</dbReference>
<dbReference type="HAMAP" id="MF_00238">
    <property type="entry name" value="Cytidyl_kinase_type1"/>
    <property type="match status" value="1"/>
</dbReference>
<dbReference type="InterPro" id="IPR003136">
    <property type="entry name" value="Cytidylate_kin"/>
</dbReference>
<dbReference type="InterPro" id="IPR011994">
    <property type="entry name" value="Cytidylate_kinase_dom"/>
</dbReference>
<dbReference type="InterPro" id="IPR027417">
    <property type="entry name" value="P-loop_NTPase"/>
</dbReference>
<dbReference type="NCBIfam" id="TIGR00017">
    <property type="entry name" value="cmk"/>
    <property type="match status" value="1"/>
</dbReference>
<dbReference type="Pfam" id="PF02224">
    <property type="entry name" value="Cytidylate_kin"/>
    <property type="match status" value="1"/>
</dbReference>
<dbReference type="SUPFAM" id="SSF52540">
    <property type="entry name" value="P-loop containing nucleoside triphosphate hydrolases"/>
    <property type="match status" value="1"/>
</dbReference>
<keyword id="KW-0067">ATP-binding</keyword>
<keyword id="KW-0963">Cytoplasm</keyword>
<keyword id="KW-0418">Kinase</keyword>
<keyword id="KW-0547">Nucleotide-binding</keyword>
<keyword id="KW-1185">Reference proteome</keyword>
<keyword id="KW-0808">Transferase</keyword>
<reference key="1">
    <citation type="journal article" date="2008" name="BMC Genomics">
        <title>The linear chromosome of the plant-pathogenic mycoplasma 'Candidatus Phytoplasma mali'.</title>
        <authorList>
            <person name="Kube M."/>
            <person name="Schneider B."/>
            <person name="Kuhl H."/>
            <person name="Dandekar T."/>
            <person name="Heitmann K."/>
            <person name="Migdoll A.M."/>
            <person name="Reinhardt R."/>
            <person name="Seemueller E."/>
        </authorList>
    </citation>
    <scope>NUCLEOTIDE SEQUENCE [LARGE SCALE GENOMIC DNA]</scope>
    <source>
        <strain>AT</strain>
    </source>
</reference>
<protein>
    <recommendedName>
        <fullName evidence="1">Cytidylate kinase</fullName>
        <shortName evidence="1">CK</shortName>
        <ecNumber evidence="1">2.7.4.25</ecNumber>
    </recommendedName>
    <alternativeName>
        <fullName evidence="1">Cytidine monophosphate kinase</fullName>
        <shortName evidence="1">CMP kinase</shortName>
    </alternativeName>
</protein>